<protein>
    <recommendedName>
        <fullName evidence="1">Cell division protein FtsZ 2</fullName>
    </recommendedName>
</protein>
<organism>
    <name type="scientific">Thermococcus kodakarensis (strain ATCC BAA-918 / JCM 12380 / KOD1)</name>
    <name type="common">Pyrococcus kodakaraensis (strain KOD1)</name>
    <dbReference type="NCBI Taxonomy" id="69014"/>
    <lineage>
        <taxon>Archaea</taxon>
        <taxon>Methanobacteriati</taxon>
        <taxon>Methanobacteriota</taxon>
        <taxon>Thermococci</taxon>
        <taxon>Thermococcales</taxon>
        <taxon>Thermococcaceae</taxon>
        <taxon>Thermococcus</taxon>
    </lineage>
</organism>
<evidence type="ECO:0000255" key="1">
    <source>
        <dbReference type="HAMAP-Rule" id="MF_00909"/>
    </source>
</evidence>
<keyword id="KW-0131">Cell cycle</keyword>
<keyword id="KW-0132">Cell division</keyword>
<keyword id="KW-0963">Cytoplasm</keyword>
<keyword id="KW-0342">GTP-binding</keyword>
<keyword id="KW-0547">Nucleotide-binding</keyword>
<keyword id="KW-1185">Reference proteome</keyword>
<keyword id="KW-0717">Septation</keyword>
<feature type="chain" id="PRO_0000114412" description="Cell division protein FtsZ 2">
    <location>
        <begin position="1"/>
        <end position="413"/>
    </location>
</feature>
<feature type="binding site" evidence="1">
    <location>
        <begin position="132"/>
        <end position="134"/>
    </location>
    <ligand>
        <name>GTP</name>
        <dbReference type="ChEBI" id="CHEBI:37565"/>
    </ligand>
</feature>
<feature type="binding site" evidence="1">
    <location>
        <position position="171"/>
    </location>
    <ligand>
        <name>GTP</name>
        <dbReference type="ChEBI" id="CHEBI:37565"/>
    </ligand>
</feature>
<feature type="binding site" evidence="1">
    <location>
        <position position="175"/>
    </location>
    <ligand>
        <name>GTP</name>
        <dbReference type="ChEBI" id="CHEBI:37565"/>
    </ligand>
</feature>
<feature type="binding site" evidence="1">
    <location>
        <position position="218"/>
    </location>
    <ligand>
        <name>GTP</name>
        <dbReference type="ChEBI" id="CHEBI:37565"/>
    </ligand>
</feature>
<gene>
    <name evidence="1" type="primary">ftsZ2</name>
    <name type="synonym">tubB</name>
    <name type="ordered locus">TK2271</name>
</gene>
<accession>Q9HHC9</accession>
<sequence length="413" mass="44705">MVFKLLEQAGIKIDLDDEPKKVQTAPQFDDDDENEIRIVIVGVGGSGNNTITRLYDLGVQGAELIAMNTDAQALKHAKAHKKLLLGKDLTQGKGSGGDPEVGYRAAEASAHEIAETIGDADLVFITAGMGNGTGTGAAPVVARVIKERARHNGRFREPLVISVVTYPFKNEGKIREEKAKAGIKALLYYSDTVVIIENDKLLQLVPKLPINAAFRFADEIIARMVKGITETIKLPSMVNIDFADVYSIMHNGGAALIGIGESDSSNRAVDAVKNALQNKLLDVEYGSGEKALVHFTVGPDVSLGEINEAMNIVYEKLGEKSEIKWGARIDEDMGKMVRAMVIMTGVKSPHILGGETALQLPVKESLLPAEPKAGFNSFEDKIYKVISRKSDEKPGSDMRGYINKLLADFDDLS</sequence>
<comment type="function">
    <text evidence="1">Essential cell division protein that forms a contractile ring structure (Z ring) at the future cell division site. The regulation of the ring assembly controls the timing and the location of cell division. One of the functions of the FtsZ ring is to recruit other cell division proteins to the septum to produce a new cell wall between the dividing cells. Binds GTP and shows GTPase activity.</text>
</comment>
<comment type="subunit">
    <text evidence="1">Homodimer. Polymerizes to form a dynamic ring structure in a strictly GTP-dependent manner. Interacts directly with several other division proteins.</text>
</comment>
<comment type="subcellular location">
    <subcellularLocation>
        <location evidence="1">Cytoplasm</location>
    </subcellularLocation>
    <text evidence="1">Assembles at midcell at the inner surface of the cytoplasmic membrane.</text>
</comment>
<comment type="similarity">
    <text evidence="1">Belongs to the FtsZ family.</text>
</comment>
<name>FTSZ2_THEKO</name>
<dbReference type="EMBL" id="AB031744">
    <property type="protein sequence ID" value="BAB17295.1"/>
    <property type="molecule type" value="Genomic_DNA"/>
</dbReference>
<dbReference type="EMBL" id="AP006878">
    <property type="protein sequence ID" value="BAD86460.1"/>
    <property type="molecule type" value="Genomic_DNA"/>
</dbReference>
<dbReference type="RefSeq" id="WP_011251221.1">
    <property type="nucleotide sequence ID" value="NC_006624.1"/>
</dbReference>
<dbReference type="SMR" id="Q9HHC9"/>
<dbReference type="IntAct" id="Q9HHC9">
    <property type="interactions" value="1"/>
</dbReference>
<dbReference type="MINT" id="Q9HHC9"/>
<dbReference type="STRING" id="69014.TK2271"/>
<dbReference type="EnsemblBacteria" id="BAD86460">
    <property type="protein sequence ID" value="BAD86460"/>
    <property type="gene ID" value="TK2271"/>
</dbReference>
<dbReference type="GeneID" id="78448817"/>
<dbReference type="KEGG" id="tko:TK2271"/>
<dbReference type="PATRIC" id="fig|69014.16.peg.2226"/>
<dbReference type="eggNOG" id="arCOG02201">
    <property type="taxonomic scope" value="Archaea"/>
</dbReference>
<dbReference type="HOGENOM" id="CLU_024865_0_1_2"/>
<dbReference type="InParanoid" id="Q9HHC9"/>
<dbReference type="OrthoDB" id="371908at2157"/>
<dbReference type="PhylomeDB" id="Q9HHC9"/>
<dbReference type="Proteomes" id="UP000000536">
    <property type="component" value="Chromosome"/>
</dbReference>
<dbReference type="GO" id="GO:0032153">
    <property type="term" value="C:cell division site"/>
    <property type="evidence" value="ECO:0000318"/>
    <property type="project" value="GO_Central"/>
</dbReference>
<dbReference type="GO" id="GO:0005737">
    <property type="term" value="C:cytoplasm"/>
    <property type="evidence" value="ECO:0000318"/>
    <property type="project" value="GO_Central"/>
</dbReference>
<dbReference type="GO" id="GO:0005525">
    <property type="term" value="F:GTP binding"/>
    <property type="evidence" value="ECO:0000318"/>
    <property type="project" value="GO_Central"/>
</dbReference>
<dbReference type="GO" id="GO:0003924">
    <property type="term" value="F:GTPase activity"/>
    <property type="evidence" value="ECO:0000318"/>
    <property type="project" value="GO_Central"/>
</dbReference>
<dbReference type="GO" id="GO:0051301">
    <property type="term" value="P:cell division"/>
    <property type="evidence" value="ECO:0000318"/>
    <property type="project" value="GO_Central"/>
</dbReference>
<dbReference type="GO" id="GO:0043093">
    <property type="term" value="P:FtsZ-dependent cytokinesis"/>
    <property type="evidence" value="ECO:0007669"/>
    <property type="project" value="UniProtKB-UniRule"/>
</dbReference>
<dbReference type="GO" id="GO:0051258">
    <property type="term" value="P:protein polymerization"/>
    <property type="evidence" value="ECO:0007669"/>
    <property type="project" value="UniProtKB-UniRule"/>
</dbReference>
<dbReference type="CDD" id="cd02201">
    <property type="entry name" value="FtsZ_type1"/>
    <property type="match status" value="1"/>
</dbReference>
<dbReference type="FunFam" id="3.40.50.1440:FF:000023">
    <property type="entry name" value="Cell division protein FtsZ"/>
    <property type="match status" value="1"/>
</dbReference>
<dbReference type="Gene3D" id="3.40.50.1440">
    <property type="entry name" value="Tubulin/FtsZ, GTPase domain"/>
    <property type="match status" value="1"/>
</dbReference>
<dbReference type="HAMAP" id="MF_00909">
    <property type="entry name" value="FtsZ"/>
    <property type="match status" value="1"/>
</dbReference>
<dbReference type="InterPro" id="IPR000158">
    <property type="entry name" value="Cell_div_FtsZ"/>
</dbReference>
<dbReference type="InterPro" id="IPR020805">
    <property type="entry name" value="Cell_div_FtsZ_CS"/>
</dbReference>
<dbReference type="InterPro" id="IPR045061">
    <property type="entry name" value="FtsZ/CetZ"/>
</dbReference>
<dbReference type="InterPro" id="IPR024757">
    <property type="entry name" value="FtsZ_C"/>
</dbReference>
<dbReference type="InterPro" id="IPR008280">
    <property type="entry name" value="Tub_FtsZ_C"/>
</dbReference>
<dbReference type="InterPro" id="IPR018316">
    <property type="entry name" value="Tubulin/FtsZ_2-layer-sand-dom"/>
</dbReference>
<dbReference type="InterPro" id="IPR036525">
    <property type="entry name" value="Tubulin/FtsZ_GTPase_sf"/>
</dbReference>
<dbReference type="InterPro" id="IPR003008">
    <property type="entry name" value="Tubulin_FtsZ_GTPase"/>
</dbReference>
<dbReference type="NCBIfam" id="TIGR00065">
    <property type="entry name" value="ftsZ"/>
    <property type="match status" value="1"/>
</dbReference>
<dbReference type="PANTHER" id="PTHR30314:SF9">
    <property type="entry name" value="CELL DIVISION PROTEIN FTSZ 2"/>
    <property type="match status" value="1"/>
</dbReference>
<dbReference type="PANTHER" id="PTHR30314">
    <property type="entry name" value="CELL DIVISION PROTEIN FTSZ-RELATED"/>
    <property type="match status" value="1"/>
</dbReference>
<dbReference type="Pfam" id="PF12327">
    <property type="entry name" value="FtsZ_C"/>
    <property type="match status" value="1"/>
</dbReference>
<dbReference type="Pfam" id="PF00091">
    <property type="entry name" value="Tubulin"/>
    <property type="match status" value="1"/>
</dbReference>
<dbReference type="PRINTS" id="PR00423">
    <property type="entry name" value="CELLDVISFTSZ"/>
</dbReference>
<dbReference type="SMART" id="SM00864">
    <property type="entry name" value="Tubulin"/>
    <property type="match status" value="1"/>
</dbReference>
<dbReference type="SMART" id="SM00865">
    <property type="entry name" value="Tubulin_C"/>
    <property type="match status" value="1"/>
</dbReference>
<dbReference type="SUPFAM" id="SSF55307">
    <property type="entry name" value="Tubulin C-terminal domain-like"/>
    <property type="match status" value="1"/>
</dbReference>
<dbReference type="SUPFAM" id="SSF52490">
    <property type="entry name" value="Tubulin nucleotide-binding domain-like"/>
    <property type="match status" value="1"/>
</dbReference>
<dbReference type="PROSITE" id="PS01134">
    <property type="entry name" value="FTSZ_1"/>
    <property type="match status" value="1"/>
</dbReference>
<dbReference type="PROSITE" id="PS01135">
    <property type="entry name" value="FTSZ_2"/>
    <property type="match status" value="1"/>
</dbReference>
<proteinExistence type="inferred from homology"/>
<reference key="1">
    <citation type="submission" date="1999-08" db="EMBL/GenBank/DDBJ databases">
        <title>Characterization of two ftsZ homologs from Pyrococcus kodakaraensis KOD1.</title>
        <authorList>
            <person name="Nagahisa K."/>
            <person name="Nakamura T."/>
            <person name="Fujiwara S."/>
            <person name="Takagi M."/>
            <person name="Imanaka T."/>
        </authorList>
    </citation>
    <scope>NUCLEOTIDE SEQUENCE [GENOMIC DNA]</scope>
    <source>
        <strain>ATCC BAA-918 / JCM 12380 / KOD1</strain>
    </source>
</reference>
<reference key="2">
    <citation type="journal article" date="2005" name="Genome Res.">
        <title>Complete genome sequence of the hyperthermophilic archaeon Thermococcus kodakaraensis KOD1 and comparison with Pyrococcus genomes.</title>
        <authorList>
            <person name="Fukui T."/>
            <person name="Atomi H."/>
            <person name="Kanai T."/>
            <person name="Matsumi R."/>
            <person name="Fujiwara S."/>
            <person name="Imanaka T."/>
        </authorList>
    </citation>
    <scope>NUCLEOTIDE SEQUENCE [LARGE SCALE GENOMIC DNA]</scope>
    <source>
        <strain>ATCC BAA-918 / JCM 12380 / KOD1</strain>
    </source>
</reference>